<reference key="1">
    <citation type="journal article" date="2007" name="ISME J.">
        <title>Population level functional diversity in a microbial community revealed by comparative genomic and metagenomic analyses.</title>
        <authorList>
            <person name="Bhaya D."/>
            <person name="Grossman A.R."/>
            <person name="Steunou A.-S."/>
            <person name="Khuri N."/>
            <person name="Cohan F.M."/>
            <person name="Hamamura N."/>
            <person name="Melendrez M.C."/>
            <person name="Bateson M.M."/>
            <person name="Ward D.M."/>
            <person name="Heidelberg J.F."/>
        </authorList>
    </citation>
    <scope>NUCLEOTIDE SEQUENCE [LARGE SCALE GENOMIC DNA]</scope>
    <source>
        <strain>JA-2-3B'a(2-13)</strain>
    </source>
</reference>
<dbReference type="EC" id="2.8.4.3" evidence="1"/>
<dbReference type="EMBL" id="CP000240">
    <property type="protein sequence ID" value="ABD02642.1"/>
    <property type="molecule type" value="Genomic_DNA"/>
</dbReference>
<dbReference type="RefSeq" id="WP_011433286.1">
    <property type="nucleotide sequence ID" value="NC_007776.1"/>
</dbReference>
<dbReference type="SMR" id="Q2JKY0"/>
<dbReference type="STRING" id="321332.CYB_1683"/>
<dbReference type="KEGG" id="cyb:CYB_1683"/>
<dbReference type="eggNOG" id="COG0621">
    <property type="taxonomic scope" value="Bacteria"/>
</dbReference>
<dbReference type="HOGENOM" id="CLU_018697_2_2_3"/>
<dbReference type="OrthoDB" id="9805215at2"/>
<dbReference type="Proteomes" id="UP000001938">
    <property type="component" value="Chromosome"/>
</dbReference>
<dbReference type="GO" id="GO:0005737">
    <property type="term" value="C:cytoplasm"/>
    <property type="evidence" value="ECO:0007669"/>
    <property type="project" value="UniProtKB-SubCell"/>
</dbReference>
<dbReference type="GO" id="GO:0051539">
    <property type="term" value="F:4 iron, 4 sulfur cluster binding"/>
    <property type="evidence" value="ECO:0007669"/>
    <property type="project" value="UniProtKB-UniRule"/>
</dbReference>
<dbReference type="GO" id="GO:0046872">
    <property type="term" value="F:metal ion binding"/>
    <property type="evidence" value="ECO:0007669"/>
    <property type="project" value="UniProtKB-KW"/>
</dbReference>
<dbReference type="GO" id="GO:0035596">
    <property type="term" value="F:methylthiotransferase activity"/>
    <property type="evidence" value="ECO:0007669"/>
    <property type="project" value="InterPro"/>
</dbReference>
<dbReference type="GO" id="GO:0035600">
    <property type="term" value="P:tRNA methylthiolation"/>
    <property type="evidence" value="ECO:0007669"/>
    <property type="project" value="TreeGrafter"/>
</dbReference>
<dbReference type="CDD" id="cd01335">
    <property type="entry name" value="Radical_SAM"/>
    <property type="match status" value="1"/>
</dbReference>
<dbReference type="FunFam" id="3.40.50.12160:FF:000006">
    <property type="entry name" value="tRNA-2-methylthio-N(6)-dimethylallyladenosine synthase"/>
    <property type="match status" value="1"/>
</dbReference>
<dbReference type="FunFam" id="3.80.30.20:FF:000001">
    <property type="entry name" value="tRNA-2-methylthio-N(6)-dimethylallyladenosine synthase 2"/>
    <property type="match status" value="1"/>
</dbReference>
<dbReference type="Gene3D" id="3.40.50.12160">
    <property type="entry name" value="Methylthiotransferase, N-terminal domain"/>
    <property type="match status" value="1"/>
</dbReference>
<dbReference type="Gene3D" id="3.80.30.20">
    <property type="entry name" value="tm_1862 like domain"/>
    <property type="match status" value="1"/>
</dbReference>
<dbReference type="HAMAP" id="MF_01864">
    <property type="entry name" value="tRNA_metthiotr_MiaB"/>
    <property type="match status" value="1"/>
</dbReference>
<dbReference type="InterPro" id="IPR006638">
    <property type="entry name" value="Elp3/MiaA/NifB-like_rSAM"/>
</dbReference>
<dbReference type="InterPro" id="IPR005839">
    <property type="entry name" value="Methylthiotransferase"/>
</dbReference>
<dbReference type="InterPro" id="IPR020612">
    <property type="entry name" value="Methylthiotransferase_CS"/>
</dbReference>
<dbReference type="InterPro" id="IPR013848">
    <property type="entry name" value="Methylthiotransferase_N"/>
</dbReference>
<dbReference type="InterPro" id="IPR038135">
    <property type="entry name" value="Methylthiotransferase_N_sf"/>
</dbReference>
<dbReference type="InterPro" id="IPR006463">
    <property type="entry name" value="MiaB_methiolase"/>
</dbReference>
<dbReference type="InterPro" id="IPR007197">
    <property type="entry name" value="rSAM"/>
</dbReference>
<dbReference type="InterPro" id="IPR023404">
    <property type="entry name" value="rSAM_horseshoe"/>
</dbReference>
<dbReference type="InterPro" id="IPR002792">
    <property type="entry name" value="TRAM_dom"/>
</dbReference>
<dbReference type="NCBIfam" id="TIGR01574">
    <property type="entry name" value="miaB-methiolase"/>
    <property type="match status" value="1"/>
</dbReference>
<dbReference type="NCBIfam" id="TIGR00089">
    <property type="entry name" value="MiaB/RimO family radical SAM methylthiotransferase"/>
    <property type="match status" value="1"/>
</dbReference>
<dbReference type="PANTHER" id="PTHR43020">
    <property type="entry name" value="CDK5 REGULATORY SUBUNIT-ASSOCIATED PROTEIN 1"/>
    <property type="match status" value="1"/>
</dbReference>
<dbReference type="PANTHER" id="PTHR43020:SF2">
    <property type="entry name" value="MITOCHONDRIAL TRNA METHYLTHIOTRANSFERASE CDK5RAP1"/>
    <property type="match status" value="1"/>
</dbReference>
<dbReference type="Pfam" id="PF04055">
    <property type="entry name" value="Radical_SAM"/>
    <property type="match status" value="1"/>
</dbReference>
<dbReference type="Pfam" id="PF01938">
    <property type="entry name" value="TRAM"/>
    <property type="match status" value="1"/>
</dbReference>
<dbReference type="Pfam" id="PF00919">
    <property type="entry name" value="UPF0004"/>
    <property type="match status" value="1"/>
</dbReference>
<dbReference type="SFLD" id="SFLDF00273">
    <property type="entry name" value="(dimethylallyl)adenosine_tRNA"/>
    <property type="match status" value="1"/>
</dbReference>
<dbReference type="SFLD" id="SFLDG01082">
    <property type="entry name" value="B12-binding_domain_containing"/>
    <property type="match status" value="1"/>
</dbReference>
<dbReference type="SFLD" id="SFLDG01061">
    <property type="entry name" value="methylthiotransferase"/>
    <property type="match status" value="1"/>
</dbReference>
<dbReference type="SMART" id="SM00729">
    <property type="entry name" value="Elp3"/>
    <property type="match status" value="1"/>
</dbReference>
<dbReference type="SUPFAM" id="SSF102114">
    <property type="entry name" value="Radical SAM enzymes"/>
    <property type="match status" value="1"/>
</dbReference>
<dbReference type="PROSITE" id="PS51449">
    <property type="entry name" value="MTTASE_N"/>
    <property type="match status" value="1"/>
</dbReference>
<dbReference type="PROSITE" id="PS01278">
    <property type="entry name" value="MTTASE_RADICAL"/>
    <property type="match status" value="1"/>
</dbReference>
<dbReference type="PROSITE" id="PS51918">
    <property type="entry name" value="RADICAL_SAM"/>
    <property type="match status" value="1"/>
</dbReference>
<dbReference type="PROSITE" id="PS50926">
    <property type="entry name" value="TRAM"/>
    <property type="match status" value="1"/>
</dbReference>
<sequence length="444" mass="49773">MAAPTYYTITFGCQMNRADTERMAGILESLGYVATEDELQADLVLYNTCTIRDNAEQKVYSYLGIQAQRKRKNPAIKLIVAGCVAQQEGEKLLRRVPELDLVMGPQYVNRLGDLLAQVEAGNQVVATDPVEIPEDITKPRRDSQVTAWINVIYGCNERCTYCIVPRVRGQEQSRQPQAIRAEIEDVARAGYREVTLLGQNIDAYGRDLDPKTNLASLLRFVHSVEGIERIRFATSHPRYFTEELITTCAELPKVCEHFHIPFQAGSNEVLKRMRRGYTHERYRQIIQLIRQYMPEAAISADAIVGFPGETEAQFQETLQLVQDIGFDQVNTAAYSPRPGTPAAEWPDQVPEEEKSDRLQRLNRLVAEVAAARSARLLGQVQEVLVEGPNPKNPRQAMGRTRGNRLVFFEGDPEELQGSLVPVRITATRAFSLTGEAVTVRASGP</sequence>
<feature type="chain" id="PRO_0000374598" description="tRNA-2-methylthio-N(6)-dimethylallyladenosine synthase">
    <location>
        <begin position="1"/>
        <end position="444"/>
    </location>
</feature>
<feature type="domain" description="MTTase N-terminal" evidence="1">
    <location>
        <begin position="4"/>
        <end position="120"/>
    </location>
</feature>
<feature type="domain" description="Radical SAM core" evidence="2">
    <location>
        <begin position="141"/>
        <end position="372"/>
    </location>
</feature>
<feature type="domain" description="TRAM" evidence="1">
    <location>
        <begin position="374"/>
        <end position="438"/>
    </location>
</feature>
<feature type="binding site" evidence="1">
    <location>
        <position position="13"/>
    </location>
    <ligand>
        <name>[4Fe-4S] cluster</name>
        <dbReference type="ChEBI" id="CHEBI:49883"/>
        <label>1</label>
    </ligand>
</feature>
<feature type="binding site" evidence="1">
    <location>
        <position position="49"/>
    </location>
    <ligand>
        <name>[4Fe-4S] cluster</name>
        <dbReference type="ChEBI" id="CHEBI:49883"/>
        <label>1</label>
    </ligand>
</feature>
<feature type="binding site" evidence="1">
    <location>
        <position position="83"/>
    </location>
    <ligand>
        <name>[4Fe-4S] cluster</name>
        <dbReference type="ChEBI" id="CHEBI:49883"/>
        <label>1</label>
    </ligand>
</feature>
<feature type="binding site" evidence="1">
    <location>
        <position position="155"/>
    </location>
    <ligand>
        <name>[4Fe-4S] cluster</name>
        <dbReference type="ChEBI" id="CHEBI:49883"/>
        <label>2</label>
        <note>4Fe-4S-S-AdoMet</note>
    </ligand>
</feature>
<feature type="binding site" evidence="1">
    <location>
        <position position="159"/>
    </location>
    <ligand>
        <name>[4Fe-4S] cluster</name>
        <dbReference type="ChEBI" id="CHEBI:49883"/>
        <label>2</label>
        <note>4Fe-4S-S-AdoMet</note>
    </ligand>
</feature>
<feature type="binding site" evidence="1">
    <location>
        <position position="162"/>
    </location>
    <ligand>
        <name>[4Fe-4S] cluster</name>
        <dbReference type="ChEBI" id="CHEBI:49883"/>
        <label>2</label>
        <note>4Fe-4S-S-AdoMet</note>
    </ligand>
</feature>
<comment type="function">
    <text evidence="1">Catalyzes the methylthiolation of N6-(dimethylallyl)adenosine (i(6)A), leading to the formation of 2-methylthio-N6-(dimethylallyl)adenosine (ms(2)i(6)A) at position 37 in tRNAs that read codons beginning with uridine.</text>
</comment>
<comment type="catalytic activity">
    <reaction evidence="1">
        <text>N(6)-dimethylallyladenosine(37) in tRNA + (sulfur carrier)-SH + AH2 + 2 S-adenosyl-L-methionine = 2-methylsulfanyl-N(6)-dimethylallyladenosine(37) in tRNA + (sulfur carrier)-H + 5'-deoxyadenosine + L-methionine + A + S-adenosyl-L-homocysteine + 2 H(+)</text>
        <dbReference type="Rhea" id="RHEA:37067"/>
        <dbReference type="Rhea" id="RHEA-COMP:10375"/>
        <dbReference type="Rhea" id="RHEA-COMP:10376"/>
        <dbReference type="Rhea" id="RHEA-COMP:14737"/>
        <dbReference type="Rhea" id="RHEA-COMP:14739"/>
        <dbReference type="ChEBI" id="CHEBI:13193"/>
        <dbReference type="ChEBI" id="CHEBI:15378"/>
        <dbReference type="ChEBI" id="CHEBI:17319"/>
        <dbReference type="ChEBI" id="CHEBI:17499"/>
        <dbReference type="ChEBI" id="CHEBI:29917"/>
        <dbReference type="ChEBI" id="CHEBI:57844"/>
        <dbReference type="ChEBI" id="CHEBI:57856"/>
        <dbReference type="ChEBI" id="CHEBI:59789"/>
        <dbReference type="ChEBI" id="CHEBI:64428"/>
        <dbReference type="ChEBI" id="CHEBI:74415"/>
        <dbReference type="ChEBI" id="CHEBI:74417"/>
        <dbReference type="EC" id="2.8.4.3"/>
    </reaction>
</comment>
<comment type="cofactor">
    <cofactor evidence="1">
        <name>[4Fe-4S] cluster</name>
        <dbReference type="ChEBI" id="CHEBI:49883"/>
    </cofactor>
    <text evidence="1">Binds 2 [4Fe-4S] clusters. One cluster is coordinated with 3 cysteines and an exchangeable S-adenosyl-L-methionine.</text>
</comment>
<comment type="subunit">
    <text evidence="1">Monomer.</text>
</comment>
<comment type="subcellular location">
    <subcellularLocation>
        <location evidence="1">Cytoplasm</location>
    </subcellularLocation>
</comment>
<comment type="similarity">
    <text evidence="1">Belongs to the methylthiotransferase family. MiaB subfamily.</text>
</comment>
<proteinExistence type="inferred from homology"/>
<evidence type="ECO:0000255" key="1">
    <source>
        <dbReference type="HAMAP-Rule" id="MF_01864"/>
    </source>
</evidence>
<evidence type="ECO:0000255" key="2">
    <source>
        <dbReference type="PROSITE-ProRule" id="PRU01266"/>
    </source>
</evidence>
<accession>Q2JKY0</accession>
<gene>
    <name evidence="1" type="primary">miaB</name>
    <name type="ordered locus">CYB_1683</name>
</gene>
<organism>
    <name type="scientific">Synechococcus sp. (strain JA-2-3B'a(2-13))</name>
    <name type="common">Cyanobacteria bacterium Yellowstone B-Prime</name>
    <dbReference type="NCBI Taxonomy" id="321332"/>
    <lineage>
        <taxon>Bacteria</taxon>
        <taxon>Bacillati</taxon>
        <taxon>Cyanobacteriota</taxon>
        <taxon>Cyanophyceae</taxon>
        <taxon>Synechococcales</taxon>
        <taxon>Synechococcaceae</taxon>
        <taxon>Synechococcus</taxon>
    </lineage>
</organism>
<name>MIAB_SYNJB</name>
<keyword id="KW-0004">4Fe-4S</keyword>
<keyword id="KW-0963">Cytoplasm</keyword>
<keyword id="KW-0408">Iron</keyword>
<keyword id="KW-0411">Iron-sulfur</keyword>
<keyword id="KW-0479">Metal-binding</keyword>
<keyword id="KW-1185">Reference proteome</keyword>
<keyword id="KW-0949">S-adenosyl-L-methionine</keyword>
<keyword id="KW-0808">Transferase</keyword>
<keyword id="KW-0819">tRNA processing</keyword>
<protein>
    <recommendedName>
        <fullName evidence="1">tRNA-2-methylthio-N(6)-dimethylallyladenosine synthase</fullName>
        <ecNumber evidence="1">2.8.4.3</ecNumber>
    </recommendedName>
    <alternativeName>
        <fullName evidence="1">(Dimethylallyl)adenosine tRNA methylthiotransferase MiaB</fullName>
    </alternativeName>
    <alternativeName>
        <fullName evidence="1">tRNA-i(6)A37 methylthiotransferase</fullName>
    </alternativeName>
</protein>